<sequence length="943" mass="106357">MDTKEEKKEQKERKQSYFARLKKKKQAKQNAEIVSAASSKSRSGKDDANSDILEQDKFNVTAEGDHSTDDKKKRKSNQLKEIRRTELKRYYSVDDNQNKTHDKKEKKMMVQKPQGTMEYTAGSQDTLNSVALKFNVTPNKLVELNKLFTHTIVPGQVLFVPDANISSSTIQLSSSTPGATVSPSSSDAEYDKLPDADLARKALKPIERVLSSTSEEDEPGVVKFLKMNCRYFTDGKGVVGGVMIVTPNNIMFDPHKSDPLVIENGCEEYGLICPMEEVVSIALYSDISHMKIKDALPSDLPRDLCPLYRPGEWEDLASEKDINPFSKFKSINKEKRQQNGERTLALDAKSVRSPEESTERTCTRIEPPDNSELWKLKNLQSSRGTTSESPSVTQLSMRAALEPTAKENCLLKGDEDFVDLEELSSQPESGINKGDATKECLSYDQKKDGPHTVMSAKKGHVQSAQEVMGPESDTELKGALDLETAEKQDEAPEVDKHSGSPENLGESTLNIHEDLDKIKLIEFYLNKNKEGSQLLENVQKSELSDRKSIEPGGIDITLSSSLPQAGDSPPEDNKEPGTLWVKGGETLPLKLDPSAEETVINNKEVLDSLGSSLDKMCHSAQMDNKSEIQLWLLKRIQVPIEDILPSKEEKSKTPPMFLCIKVGKPMRKSFASHTATMVQQYSKRRKQPEYWFAVPRERVDHLYTFFVQWSPDVYGKDAKEQGFVVVEKEELNMIDNFFSEPTTKSWEIITVEEAKRRKSTCSYYEEEEEEEEGLPILQPHSALLENMHIEQLARRLPARVQGYPWRLAYSTLEHGTSLKTLYRKSASLDSPVLLVIKDMDNQIFGAYATHPFKFSDHYYGTGETFLYTFSPNFKVFKWSGENSYFINGDISSLELGGGGGRFGLWLDADLYHGRSNSCSTFNNDILSKKEDFIVQDLEVWTFE</sequence>
<organism>
    <name type="scientific">Mus musculus</name>
    <name type="common">Mouse</name>
    <dbReference type="NCBI Taxonomy" id="10090"/>
    <lineage>
        <taxon>Eukaryota</taxon>
        <taxon>Metazoa</taxon>
        <taxon>Chordata</taxon>
        <taxon>Craniata</taxon>
        <taxon>Vertebrata</taxon>
        <taxon>Euteleostomi</taxon>
        <taxon>Mammalia</taxon>
        <taxon>Eutheria</taxon>
        <taxon>Euarchontoglires</taxon>
        <taxon>Glires</taxon>
        <taxon>Rodentia</taxon>
        <taxon>Myomorpha</taxon>
        <taxon>Muroidea</taxon>
        <taxon>Muridae</taxon>
        <taxon>Murinae</taxon>
        <taxon>Mus</taxon>
        <taxon>Mus</taxon>
    </lineage>
</organism>
<protein>
    <recommendedName>
        <fullName>Nuclear receptor coactivator 7</fullName>
    </recommendedName>
</protein>
<comment type="function">
    <text evidence="1">Enhances the transcriptional activities of several nuclear receptors. Involved in the coactivation of different nuclear receptors, such as ESR1, THRB, PPARG and RARA (By similarity).</text>
</comment>
<comment type="subunit">
    <text evidence="1">Interacts with ESR1, ESR2A, ESR2B, THRB, PPARG and RARA in a ligand-inducible manner. Interacts with the heterodimer AHR-ARNT (By similarity).</text>
</comment>
<comment type="subcellular location">
    <subcellularLocation>
        <location evidence="1">Nucleus</location>
    </subcellularLocation>
</comment>
<comment type="alternative products">
    <event type="alternative splicing"/>
    <isoform>
        <id>Q6DFV7-1</id>
        <name>1</name>
        <sequence type="displayed"/>
    </isoform>
    <isoform>
        <id>Q6DFV7-2</id>
        <name>2</name>
        <sequence type="described" ref="VSP_019641 VSP_019642"/>
    </isoform>
    <isoform>
        <id>Q6DFV7-3</id>
        <name>3</name>
        <sequence type="described" ref="VSP_019640 VSP_019643"/>
    </isoform>
    <isoform>
        <id>Q6DFV7-4</id>
        <name>4</name>
        <sequence type="described" ref="VSP_019640 VSP_019643 VSP_019648"/>
    </isoform>
    <isoform>
        <id>Q6DFV7-5</id>
        <name>5</name>
        <sequence type="described" ref="VSP_019640 VSP_019643 VSP_019644 VSP_019647"/>
    </isoform>
    <isoform>
        <id>Q6DFV7-6</id>
        <name>6</name>
        <sequence type="described" ref="VSP_019640 VSP_019643 VSP_019645 VSP_019646"/>
    </isoform>
</comment>
<comment type="tissue specificity">
    <text evidence="7">Highly expressed in brain and kidney. Weakly expressed in mammary gland, lung and testis. In brain, expression is found in neurons of cerebral cortex, thalamus, hypothalamus, hippocampus, cerebellum, striatum and choroid plexus.</text>
</comment>
<comment type="similarity">
    <text evidence="10">Belongs to the OXR1 family.</text>
</comment>
<comment type="sequence caution" evidence="10">
    <conflict type="frameshift">
        <sequence resource="EMBL-CDS" id="BAC87660"/>
    </conflict>
</comment>
<dbReference type="EMBL" id="AK128935">
    <property type="protein sequence ID" value="BAC87660.1"/>
    <property type="status" value="ALT_FRAME"/>
    <property type="molecule type" value="mRNA"/>
</dbReference>
<dbReference type="EMBL" id="AK033503">
    <property type="protein sequence ID" value="BAC28325.1"/>
    <property type="molecule type" value="mRNA"/>
</dbReference>
<dbReference type="EMBL" id="AK042369">
    <property type="protein sequence ID" value="BAC31241.1"/>
    <property type="molecule type" value="mRNA"/>
</dbReference>
<dbReference type="EMBL" id="AK144324">
    <property type="protein sequence ID" value="BAE25834.1"/>
    <property type="molecule type" value="mRNA"/>
</dbReference>
<dbReference type="EMBL" id="AK171679">
    <property type="protein sequence ID" value="BAE42607.1"/>
    <property type="molecule type" value="mRNA"/>
</dbReference>
<dbReference type="EMBL" id="BC049997">
    <property type="protein sequence ID" value="AAH49997.1"/>
    <property type="molecule type" value="mRNA"/>
</dbReference>
<dbReference type="EMBL" id="BC058572">
    <property type="protein sequence ID" value="AAH58572.1"/>
    <property type="molecule type" value="mRNA"/>
</dbReference>
<dbReference type="EMBL" id="BC076623">
    <property type="protein sequence ID" value="AAH76623.1"/>
    <property type="molecule type" value="mRNA"/>
</dbReference>
<dbReference type="EMBL" id="BC080670">
    <property type="protein sequence ID" value="AAH80670.1"/>
    <property type="molecule type" value="mRNA"/>
</dbReference>
<dbReference type="CCDS" id="CCDS23765.1">
    <molecule id="Q6DFV7-1"/>
</dbReference>
<dbReference type="CCDS" id="CCDS48530.1">
    <molecule id="Q6DFV7-3"/>
</dbReference>
<dbReference type="RefSeq" id="NP_001104737.1">
    <molecule id="Q6DFV7-3"/>
    <property type="nucleotide sequence ID" value="NM_001111267.2"/>
</dbReference>
<dbReference type="RefSeq" id="NP_766083.3">
    <molecule id="Q6DFV7-1"/>
    <property type="nucleotide sequence ID" value="NM_172495.5"/>
</dbReference>
<dbReference type="SMR" id="Q6DFV7"/>
<dbReference type="BioGRID" id="229223">
    <property type="interactions" value="9"/>
</dbReference>
<dbReference type="FunCoup" id="Q6DFV7">
    <property type="interactions" value="3180"/>
</dbReference>
<dbReference type="STRING" id="10090.ENSMUSP00000149335"/>
<dbReference type="GlyGen" id="Q6DFV7">
    <property type="glycosylation" value="1 site, 1 N-linked glycan (1 site)"/>
</dbReference>
<dbReference type="iPTMnet" id="Q6DFV7"/>
<dbReference type="PhosphoSitePlus" id="Q6DFV7"/>
<dbReference type="SwissPalm" id="Q6DFV7"/>
<dbReference type="jPOST" id="Q6DFV7"/>
<dbReference type="PaxDb" id="10090-ENSMUSP00000066741"/>
<dbReference type="PeptideAtlas" id="Q6DFV7"/>
<dbReference type="ProteomicsDB" id="252653">
    <molecule id="Q6DFV7-1"/>
</dbReference>
<dbReference type="ProteomicsDB" id="252654">
    <molecule id="Q6DFV7-2"/>
</dbReference>
<dbReference type="ProteomicsDB" id="252655">
    <molecule id="Q6DFV7-3"/>
</dbReference>
<dbReference type="ProteomicsDB" id="252656">
    <molecule id="Q6DFV7-4"/>
</dbReference>
<dbReference type="ProteomicsDB" id="252657">
    <molecule id="Q6DFV7-5"/>
</dbReference>
<dbReference type="ProteomicsDB" id="252658">
    <molecule id="Q6DFV7-6"/>
</dbReference>
<dbReference type="Pumba" id="Q6DFV7"/>
<dbReference type="Antibodypedia" id="32708">
    <property type="antibodies" value="206 antibodies from 31 providers"/>
</dbReference>
<dbReference type="DNASU" id="211329"/>
<dbReference type="Ensembl" id="ENSMUST00000068567.5">
    <molecule id="Q6DFV7-1"/>
    <property type="protein sequence ID" value="ENSMUSP00000066741.5"/>
    <property type="gene ID" value="ENSMUSG00000039697.17"/>
</dbReference>
<dbReference type="Ensembl" id="ENSMUST00000092610.12">
    <molecule id="Q6DFV7-5"/>
    <property type="protein sequence ID" value="ENSMUSP00000090273.6"/>
    <property type="gene ID" value="ENSMUSG00000039697.17"/>
</dbReference>
<dbReference type="Ensembl" id="ENSMUST00000213897.2">
    <molecule id="Q6DFV7-6"/>
    <property type="protein sequence ID" value="ENSMUSP00000148944.2"/>
    <property type="gene ID" value="ENSMUSG00000039697.17"/>
</dbReference>
<dbReference type="Ensembl" id="ENSMUST00000215725.2">
    <molecule id="Q6DFV7-2"/>
    <property type="protein sequence ID" value="ENSMUSP00000150800.2"/>
    <property type="gene ID" value="ENSMUSG00000039697.17"/>
</dbReference>
<dbReference type="Ensembl" id="ENSMUST00000215740.2">
    <molecule id="Q6DFV7-1"/>
    <property type="protein sequence ID" value="ENSMUSP00000149335.2"/>
    <property type="gene ID" value="ENSMUSG00000039697.17"/>
</dbReference>
<dbReference type="Ensembl" id="ENSMUST00000216172.2">
    <molecule id="Q6DFV7-3"/>
    <property type="protein sequence ID" value="ENSMUSP00000150981.2"/>
    <property type="gene ID" value="ENSMUSG00000039697.17"/>
</dbReference>
<dbReference type="Ensembl" id="ENSMUST00000217644.2">
    <molecule id="Q6DFV7-4"/>
    <property type="protein sequence ID" value="ENSMUSP00000150671.2"/>
    <property type="gene ID" value="ENSMUSG00000039697.17"/>
</dbReference>
<dbReference type="GeneID" id="211329"/>
<dbReference type="KEGG" id="mmu:211329"/>
<dbReference type="UCSC" id="uc007etj.2">
    <molecule id="Q6DFV7-5"/>
    <property type="organism name" value="mouse"/>
</dbReference>
<dbReference type="UCSC" id="uc007etk.2">
    <molecule id="Q6DFV7-1"/>
    <property type="organism name" value="mouse"/>
</dbReference>
<dbReference type="UCSC" id="uc007etm.2">
    <molecule id="Q6DFV7-4"/>
    <property type="organism name" value="mouse"/>
</dbReference>
<dbReference type="UCSC" id="uc007eto.2">
    <molecule id="Q6DFV7-2"/>
    <property type="organism name" value="mouse"/>
</dbReference>
<dbReference type="AGR" id="MGI:2444847"/>
<dbReference type="CTD" id="135112"/>
<dbReference type="MGI" id="MGI:2444847">
    <property type="gene designation" value="Ncoa7"/>
</dbReference>
<dbReference type="VEuPathDB" id="HostDB:ENSMUSG00000039697"/>
<dbReference type="eggNOG" id="KOG2372">
    <property type="taxonomic scope" value="Eukaryota"/>
</dbReference>
<dbReference type="GeneTree" id="ENSGT00940000155141"/>
<dbReference type="HOGENOM" id="CLU_029204_4_1_1"/>
<dbReference type="InParanoid" id="Q6DFV7"/>
<dbReference type="OMA" id="SDTQAAF"/>
<dbReference type="OrthoDB" id="26679at2759"/>
<dbReference type="PhylomeDB" id="Q6DFV7"/>
<dbReference type="TreeFam" id="TF313530"/>
<dbReference type="BioGRID-ORCS" id="211329">
    <property type="hits" value="2 hits in 74 CRISPR screens"/>
</dbReference>
<dbReference type="ChiTaRS" id="Ncoa7">
    <property type="organism name" value="mouse"/>
</dbReference>
<dbReference type="PRO" id="PR:Q6DFV7"/>
<dbReference type="Proteomes" id="UP000000589">
    <property type="component" value="Chromosome 10"/>
</dbReference>
<dbReference type="RNAct" id="Q6DFV7">
    <property type="molecule type" value="protein"/>
</dbReference>
<dbReference type="Bgee" id="ENSMUSG00000039697">
    <property type="expression patterns" value="Expressed in uterine cervix and 218 other cell types or tissues"/>
</dbReference>
<dbReference type="ExpressionAtlas" id="Q6DFV7">
    <property type="expression patterns" value="baseline and differential"/>
</dbReference>
<dbReference type="GO" id="GO:0005634">
    <property type="term" value="C:nucleus"/>
    <property type="evidence" value="ECO:0007669"/>
    <property type="project" value="UniProtKB-SubCell"/>
</dbReference>
<dbReference type="GO" id="GO:0016922">
    <property type="term" value="F:nuclear receptor binding"/>
    <property type="evidence" value="ECO:0000250"/>
    <property type="project" value="UniProtKB"/>
</dbReference>
<dbReference type="GO" id="GO:0003713">
    <property type="term" value="F:transcription coactivator activity"/>
    <property type="evidence" value="ECO:0000250"/>
    <property type="project" value="UniProtKB"/>
</dbReference>
<dbReference type="GO" id="GO:1900408">
    <property type="term" value="P:negative regulation of cellular response to oxidative stress"/>
    <property type="evidence" value="ECO:0000314"/>
    <property type="project" value="MGI"/>
</dbReference>
<dbReference type="GO" id="GO:0045944">
    <property type="term" value="P:positive regulation of transcription by RNA polymerase II"/>
    <property type="evidence" value="ECO:0000250"/>
    <property type="project" value="UniProtKB"/>
</dbReference>
<dbReference type="Gene3D" id="3.10.350.10">
    <property type="entry name" value="LysM domain"/>
    <property type="match status" value="1"/>
</dbReference>
<dbReference type="InterPro" id="IPR018392">
    <property type="entry name" value="LysM_dom"/>
</dbReference>
<dbReference type="InterPro" id="IPR036779">
    <property type="entry name" value="LysM_dom_sf"/>
</dbReference>
<dbReference type="InterPro" id="IPR006571">
    <property type="entry name" value="TLDc_dom"/>
</dbReference>
<dbReference type="PANTHER" id="PTHR23354:SF68">
    <property type="entry name" value="NUCLEAR RECEPTOR COACTIVATOR 7"/>
    <property type="match status" value="1"/>
</dbReference>
<dbReference type="PANTHER" id="PTHR23354">
    <property type="entry name" value="NUCLEOLAR PROTEIN 7/ESTROGEN RECEPTOR COACTIVATOR-RELATED"/>
    <property type="match status" value="1"/>
</dbReference>
<dbReference type="Pfam" id="PF01476">
    <property type="entry name" value="LysM"/>
    <property type="match status" value="1"/>
</dbReference>
<dbReference type="Pfam" id="PF07534">
    <property type="entry name" value="TLD"/>
    <property type="match status" value="1"/>
</dbReference>
<dbReference type="SMART" id="SM00257">
    <property type="entry name" value="LysM"/>
    <property type="match status" value="1"/>
</dbReference>
<dbReference type="SMART" id="SM00584">
    <property type="entry name" value="TLDc"/>
    <property type="match status" value="1"/>
</dbReference>
<dbReference type="SUPFAM" id="SSF54106">
    <property type="entry name" value="LysM domain"/>
    <property type="match status" value="1"/>
</dbReference>
<dbReference type="PROSITE" id="PS51782">
    <property type="entry name" value="LYSM"/>
    <property type="match status" value="1"/>
</dbReference>
<dbReference type="PROSITE" id="PS51886">
    <property type="entry name" value="TLDC"/>
    <property type="match status" value="1"/>
</dbReference>
<keyword id="KW-0007">Acetylation</keyword>
<keyword id="KW-0010">Activator</keyword>
<keyword id="KW-0025">Alternative splicing</keyword>
<keyword id="KW-0175">Coiled coil</keyword>
<keyword id="KW-0539">Nucleus</keyword>
<keyword id="KW-0597">Phosphoprotein</keyword>
<keyword id="KW-1185">Reference proteome</keyword>
<keyword id="KW-0804">Transcription</keyword>
<keyword id="KW-0805">Transcription regulation</keyword>
<feature type="chain" id="PRO_0000245230" description="Nuclear receptor coactivator 7">
    <location>
        <begin position="1"/>
        <end position="943"/>
    </location>
</feature>
<feature type="domain" description="LysM" evidence="4">
    <location>
        <begin position="117"/>
        <end position="160"/>
    </location>
</feature>
<feature type="domain" description="TLDc" evidence="5">
    <location>
        <begin position="782"/>
        <end position="943"/>
    </location>
</feature>
<feature type="region of interest" description="Disordered" evidence="6">
    <location>
        <begin position="1"/>
        <end position="83"/>
    </location>
</feature>
<feature type="region of interest" description="Disordered" evidence="6">
    <location>
        <begin position="169"/>
        <end position="189"/>
    </location>
</feature>
<feature type="region of interest" description="Disordered" evidence="6">
    <location>
        <begin position="334"/>
        <end position="369"/>
    </location>
</feature>
<feature type="region of interest" description="Disordered" evidence="6">
    <location>
        <begin position="486"/>
        <end position="507"/>
    </location>
</feature>
<feature type="region of interest" description="Disordered" evidence="6">
    <location>
        <begin position="543"/>
        <end position="576"/>
    </location>
</feature>
<feature type="coiled-coil region" evidence="3">
    <location>
        <begin position="1"/>
        <end position="32"/>
    </location>
</feature>
<feature type="compositionally biased region" description="Basic and acidic residues" evidence="6">
    <location>
        <begin position="1"/>
        <end position="15"/>
    </location>
</feature>
<feature type="compositionally biased region" description="Polar residues" evidence="6">
    <location>
        <begin position="177"/>
        <end position="187"/>
    </location>
</feature>
<feature type="compositionally biased region" description="Basic and acidic residues" evidence="6">
    <location>
        <begin position="349"/>
        <end position="369"/>
    </location>
</feature>
<feature type="compositionally biased region" description="Basic and acidic residues" evidence="6">
    <location>
        <begin position="486"/>
        <end position="499"/>
    </location>
</feature>
<feature type="modified residue" description="N-acetylmethionine" evidence="2">
    <location>
        <position position="1"/>
    </location>
</feature>
<feature type="modified residue" description="Phosphoserine" evidence="11">
    <location>
        <position position="92"/>
    </location>
</feature>
<feature type="modified residue" description="Phosphothreonine" evidence="2">
    <location>
        <position position="137"/>
    </location>
</feature>
<feature type="modified residue" description="Phosphoserine" evidence="2">
    <location>
        <position position="182"/>
    </location>
</feature>
<feature type="modified residue" description="Phosphoserine" evidence="2">
    <location>
        <position position="186"/>
    </location>
</feature>
<feature type="modified residue" description="Phosphoserine" evidence="11">
    <location>
        <position position="211"/>
    </location>
</feature>
<feature type="modified residue" description="Phosphoserine" evidence="11">
    <location>
        <position position="212"/>
    </location>
</feature>
<feature type="modified residue" description="Phosphoserine" evidence="11">
    <location>
        <position position="214"/>
    </location>
</feature>
<feature type="modified residue" description="Phosphoserine" evidence="2">
    <location>
        <position position="442"/>
    </location>
</feature>
<feature type="modified residue" description="Phosphoserine" evidence="11">
    <location>
        <position position="498"/>
    </location>
</feature>
<feature type="modified residue" description="Phosphoserine" evidence="11">
    <location>
        <position position="500"/>
    </location>
</feature>
<feature type="splice variant" id="VSP_019640" description="In isoform 3, isoform 4, isoform 5 and isoform 6." evidence="8 9">
    <location>
        <begin position="1"/>
        <end position="722"/>
    </location>
</feature>
<feature type="splice variant" id="VSP_019641" description="In isoform 2." evidence="9">
    <original>GVVGGVMIVTPNNIMFDPHKSDPLVIENGCEEYGL</original>
    <variation>VSATVIAYWSGNLQKLNKKTHCWMGVFYPQLKCMI</variation>
    <location>
        <begin position="237"/>
        <end position="271"/>
    </location>
</feature>
<feature type="splice variant" id="VSP_019642" description="In isoform 2." evidence="9">
    <location>
        <begin position="272"/>
        <end position="943"/>
    </location>
</feature>
<feature type="splice variant" id="VSP_019643" description="In isoform 3, isoform 4, isoform 5 and isoform 6." evidence="8 9">
    <original>FVVVEKEELNMIDNFFSEPTTKSWE</original>
    <variation>MRGRGLPLDIQIFYCARPDQEPFVK</variation>
    <location>
        <begin position="723"/>
        <end position="747"/>
    </location>
</feature>
<feature type="splice variant" id="VSP_019644" description="In isoform 5." evidence="9">
    <original>VFKWSGENS</original>
    <variation>GTIWSVARC</variation>
    <location>
        <begin position="875"/>
        <end position="883"/>
    </location>
</feature>
<feature type="splice variant" id="VSP_019645" description="In isoform 6." evidence="8">
    <original>VFKWSGE</original>
    <variation>PISHLGH</variation>
    <location>
        <begin position="875"/>
        <end position="881"/>
    </location>
</feature>
<feature type="splice variant" id="VSP_019646" description="In isoform 6." evidence="8">
    <location>
        <begin position="882"/>
        <end position="943"/>
    </location>
</feature>
<feature type="splice variant" id="VSP_019647" description="In isoform 5." evidence="9">
    <location>
        <begin position="884"/>
        <end position="943"/>
    </location>
</feature>
<feature type="splice variant" id="VSP_019648" description="In isoform 4." evidence="9">
    <location>
        <begin position="900"/>
        <end position="943"/>
    </location>
</feature>
<gene>
    <name type="primary">Ncoa7</name>
</gene>
<evidence type="ECO:0000250" key="1"/>
<evidence type="ECO:0000250" key="2">
    <source>
        <dbReference type="UniProtKB" id="Q8NI08"/>
    </source>
</evidence>
<evidence type="ECO:0000255" key="3"/>
<evidence type="ECO:0000255" key="4">
    <source>
        <dbReference type="PROSITE-ProRule" id="PRU01118"/>
    </source>
</evidence>
<evidence type="ECO:0000255" key="5">
    <source>
        <dbReference type="PROSITE-ProRule" id="PRU01234"/>
    </source>
</evidence>
<evidence type="ECO:0000256" key="6">
    <source>
        <dbReference type="SAM" id="MobiDB-lite"/>
    </source>
</evidence>
<evidence type="ECO:0000269" key="7">
    <source>
    </source>
</evidence>
<evidence type="ECO:0000303" key="8">
    <source>
    </source>
</evidence>
<evidence type="ECO:0000303" key="9">
    <source>
    </source>
</evidence>
<evidence type="ECO:0000305" key="10"/>
<evidence type="ECO:0007744" key="11">
    <source>
    </source>
</evidence>
<reference key="1">
    <citation type="submission" date="2003-07" db="EMBL/GenBank/DDBJ databases">
        <title>NEDO cDNA sequencing project.</title>
        <authorList>
            <person name="Ninomiya K."/>
            <person name="Wagatsuma M."/>
            <person name="Kanda K."/>
            <person name="Kondo H."/>
            <person name="Yokoi T."/>
            <person name="Kodaira H."/>
            <person name="Furuya T."/>
            <person name="Takahashi M."/>
            <person name="Kikkawa E."/>
            <person name="Omura Y."/>
            <person name="Abe K."/>
            <person name="Kamihara K."/>
            <person name="Katsuta N."/>
            <person name="Sato K."/>
            <person name="Tanikawa M."/>
            <person name="Yamazaki M."/>
            <person name="Sugiyama T."/>
            <person name="Irie R."/>
            <person name="Otsuki T."/>
            <person name="Sato H."/>
            <person name="Ota T."/>
            <person name="Wakamatsu A."/>
            <person name="Ishii S."/>
            <person name="Yamamoto J."/>
            <person name="Isono Y."/>
            <person name="Kawai-Hio Y."/>
            <person name="Saito K."/>
            <person name="Nishikawa T."/>
            <person name="Kimura K."/>
            <person name="Yamashita H."/>
            <person name="Matsuo K."/>
            <person name="Nakamura Y."/>
            <person name="Sekine M."/>
            <person name="Kikuchi H."/>
            <person name="Murakawa K."/>
            <person name="Kanehori K."/>
            <person name="Takahashi-Fujii A."/>
            <person name="Oshima A."/>
            <person name="Sugiyama A."/>
            <person name="Kawakami B."/>
            <person name="Suzuki Y."/>
            <person name="Sugano S."/>
            <person name="Nagahari K."/>
            <person name="Masuho Y."/>
            <person name="Nagai K."/>
            <person name="Isogai T."/>
        </authorList>
    </citation>
    <scope>NUCLEOTIDE SEQUENCE [LARGE SCALE MRNA] (ISOFORM 1)</scope>
</reference>
<reference key="2">
    <citation type="journal article" date="2005" name="Science">
        <title>The transcriptional landscape of the mammalian genome.</title>
        <authorList>
            <person name="Carninci P."/>
            <person name="Kasukawa T."/>
            <person name="Katayama S."/>
            <person name="Gough J."/>
            <person name="Frith M.C."/>
            <person name="Maeda N."/>
            <person name="Oyama R."/>
            <person name="Ravasi T."/>
            <person name="Lenhard B."/>
            <person name="Wells C."/>
            <person name="Kodzius R."/>
            <person name="Shimokawa K."/>
            <person name="Bajic V.B."/>
            <person name="Brenner S.E."/>
            <person name="Batalov S."/>
            <person name="Forrest A.R."/>
            <person name="Zavolan M."/>
            <person name="Davis M.J."/>
            <person name="Wilming L.G."/>
            <person name="Aidinis V."/>
            <person name="Allen J.E."/>
            <person name="Ambesi-Impiombato A."/>
            <person name="Apweiler R."/>
            <person name="Aturaliya R.N."/>
            <person name="Bailey T.L."/>
            <person name="Bansal M."/>
            <person name="Baxter L."/>
            <person name="Beisel K.W."/>
            <person name="Bersano T."/>
            <person name="Bono H."/>
            <person name="Chalk A.M."/>
            <person name="Chiu K.P."/>
            <person name="Choudhary V."/>
            <person name="Christoffels A."/>
            <person name="Clutterbuck D.R."/>
            <person name="Crowe M.L."/>
            <person name="Dalla E."/>
            <person name="Dalrymple B.P."/>
            <person name="de Bono B."/>
            <person name="Della Gatta G."/>
            <person name="di Bernardo D."/>
            <person name="Down T."/>
            <person name="Engstrom P."/>
            <person name="Fagiolini M."/>
            <person name="Faulkner G."/>
            <person name="Fletcher C.F."/>
            <person name="Fukushima T."/>
            <person name="Furuno M."/>
            <person name="Futaki S."/>
            <person name="Gariboldi M."/>
            <person name="Georgii-Hemming P."/>
            <person name="Gingeras T.R."/>
            <person name="Gojobori T."/>
            <person name="Green R.E."/>
            <person name="Gustincich S."/>
            <person name="Harbers M."/>
            <person name="Hayashi Y."/>
            <person name="Hensch T.K."/>
            <person name="Hirokawa N."/>
            <person name="Hill D."/>
            <person name="Huminiecki L."/>
            <person name="Iacono M."/>
            <person name="Ikeo K."/>
            <person name="Iwama A."/>
            <person name="Ishikawa T."/>
            <person name="Jakt M."/>
            <person name="Kanapin A."/>
            <person name="Katoh M."/>
            <person name="Kawasawa Y."/>
            <person name="Kelso J."/>
            <person name="Kitamura H."/>
            <person name="Kitano H."/>
            <person name="Kollias G."/>
            <person name="Krishnan S.P."/>
            <person name="Kruger A."/>
            <person name="Kummerfeld S.K."/>
            <person name="Kurochkin I.V."/>
            <person name="Lareau L.F."/>
            <person name="Lazarevic D."/>
            <person name="Lipovich L."/>
            <person name="Liu J."/>
            <person name="Liuni S."/>
            <person name="McWilliam S."/>
            <person name="Madan Babu M."/>
            <person name="Madera M."/>
            <person name="Marchionni L."/>
            <person name="Matsuda H."/>
            <person name="Matsuzawa S."/>
            <person name="Miki H."/>
            <person name="Mignone F."/>
            <person name="Miyake S."/>
            <person name="Morris K."/>
            <person name="Mottagui-Tabar S."/>
            <person name="Mulder N."/>
            <person name="Nakano N."/>
            <person name="Nakauchi H."/>
            <person name="Ng P."/>
            <person name="Nilsson R."/>
            <person name="Nishiguchi S."/>
            <person name="Nishikawa S."/>
            <person name="Nori F."/>
            <person name="Ohara O."/>
            <person name="Okazaki Y."/>
            <person name="Orlando V."/>
            <person name="Pang K.C."/>
            <person name="Pavan W.J."/>
            <person name="Pavesi G."/>
            <person name="Pesole G."/>
            <person name="Petrovsky N."/>
            <person name="Piazza S."/>
            <person name="Reed J."/>
            <person name="Reid J.F."/>
            <person name="Ring B.Z."/>
            <person name="Ringwald M."/>
            <person name="Rost B."/>
            <person name="Ruan Y."/>
            <person name="Salzberg S.L."/>
            <person name="Sandelin A."/>
            <person name="Schneider C."/>
            <person name="Schoenbach C."/>
            <person name="Sekiguchi K."/>
            <person name="Semple C.A."/>
            <person name="Seno S."/>
            <person name="Sessa L."/>
            <person name="Sheng Y."/>
            <person name="Shibata Y."/>
            <person name="Shimada H."/>
            <person name="Shimada K."/>
            <person name="Silva D."/>
            <person name="Sinclair B."/>
            <person name="Sperling S."/>
            <person name="Stupka E."/>
            <person name="Sugiura K."/>
            <person name="Sultana R."/>
            <person name="Takenaka Y."/>
            <person name="Taki K."/>
            <person name="Tammoja K."/>
            <person name="Tan S.L."/>
            <person name="Tang S."/>
            <person name="Taylor M.S."/>
            <person name="Tegner J."/>
            <person name="Teichmann S.A."/>
            <person name="Ueda H.R."/>
            <person name="van Nimwegen E."/>
            <person name="Verardo R."/>
            <person name="Wei C.L."/>
            <person name="Yagi K."/>
            <person name="Yamanishi H."/>
            <person name="Zabarovsky E."/>
            <person name="Zhu S."/>
            <person name="Zimmer A."/>
            <person name="Hide W."/>
            <person name="Bult C."/>
            <person name="Grimmond S.M."/>
            <person name="Teasdale R.D."/>
            <person name="Liu E.T."/>
            <person name="Brusic V."/>
            <person name="Quackenbush J."/>
            <person name="Wahlestedt C."/>
            <person name="Mattick J.S."/>
            <person name="Hume D.A."/>
            <person name="Kai C."/>
            <person name="Sasaki D."/>
            <person name="Tomaru Y."/>
            <person name="Fukuda S."/>
            <person name="Kanamori-Katayama M."/>
            <person name="Suzuki M."/>
            <person name="Aoki J."/>
            <person name="Arakawa T."/>
            <person name="Iida J."/>
            <person name="Imamura K."/>
            <person name="Itoh M."/>
            <person name="Kato T."/>
            <person name="Kawaji H."/>
            <person name="Kawagashira N."/>
            <person name="Kawashima T."/>
            <person name="Kojima M."/>
            <person name="Kondo S."/>
            <person name="Konno H."/>
            <person name="Nakano K."/>
            <person name="Ninomiya N."/>
            <person name="Nishio T."/>
            <person name="Okada M."/>
            <person name="Plessy C."/>
            <person name="Shibata K."/>
            <person name="Shiraki T."/>
            <person name="Suzuki S."/>
            <person name="Tagami M."/>
            <person name="Waki K."/>
            <person name="Watahiki A."/>
            <person name="Okamura-Oho Y."/>
            <person name="Suzuki H."/>
            <person name="Kawai J."/>
            <person name="Hayashizaki Y."/>
        </authorList>
    </citation>
    <scope>NUCLEOTIDE SEQUENCE [LARGE SCALE MRNA] (ISOFORMS 2; 3; 4 AND 5)</scope>
    <source>
        <strain>C57BL/6J</strain>
        <tissue>Colon</tissue>
        <tissue>Lung</tissue>
        <tissue>Spleen</tissue>
        <tissue>Thymus</tissue>
    </source>
</reference>
<reference key="3">
    <citation type="journal article" date="2004" name="Genome Res.">
        <title>The status, quality, and expansion of the NIH full-length cDNA project: the Mammalian Gene Collection (MGC).</title>
        <authorList>
            <consortium name="The MGC Project Team"/>
        </authorList>
    </citation>
    <scope>NUCLEOTIDE SEQUENCE [LARGE SCALE MRNA] (ISOFORMS 3 AND 6)</scope>
    <scope>NUCLEOTIDE SEQUENCE [LARGE SCALE MRNA] OF 19-943</scope>
    <source>
        <strain>C57BL/6J</strain>
        <tissue>Head</tissue>
        <tissue>Kidney</tissue>
        <tissue>Mammary gland</tissue>
    </source>
</reference>
<reference key="4">
    <citation type="journal article" date="2002" name="Mol. Cell. Biol.">
        <title>ERAP140, a conserved tissue-specific nuclear receptor coactivator.</title>
        <authorList>
            <person name="Shao W."/>
            <person name="Halachmi S."/>
            <person name="Brown M."/>
        </authorList>
    </citation>
    <scope>TISSUE SPECIFICITY</scope>
</reference>
<reference key="5">
    <citation type="journal article" date="2010" name="Cell">
        <title>A tissue-specific atlas of mouse protein phosphorylation and expression.</title>
        <authorList>
            <person name="Huttlin E.L."/>
            <person name="Jedrychowski M.P."/>
            <person name="Elias J.E."/>
            <person name="Goswami T."/>
            <person name="Rad R."/>
            <person name="Beausoleil S.A."/>
            <person name="Villen J."/>
            <person name="Haas W."/>
            <person name="Sowa M.E."/>
            <person name="Gygi S.P."/>
        </authorList>
    </citation>
    <scope>PHOSPHORYLATION [LARGE SCALE ANALYSIS] AT SER-92; SER-211; SER-212; SER-214; SER-498 AND SER-500</scope>
    <scope>IDENTIFICATION BY MASS SPECTROMETRY [LARGE SCALE ANALYSIS]</scope>
    <source>
        <tissue>Brain</tissue>
        <tissue>Brown adipose tissue</tissue>
        <tissue>Kidney</tissue>
        <tissue>Lung</tissue>
        <tissue>Spleen</tissue>
        <tissue>Testis</tissue>
    </source>
</reference>
<accession>Q6DFV7</accession>
<accession>Q3TAR1</accession>
<accession>Q3UNB3</accession>
<accession>Q66K05</accession>
<accession>Q6ZQM4</accession>
<accession>Q8BJ15</accession>
<accession>Q8BJ39</accession>
<name>NCOA7_MOUSE</name>
<proteinExistence type="evidence at protein level"/>